<protein>
    <recommendedName>
        <fullName evidence="3">Cytokinesis protein sepH</fullName>
        <ecNumber>2.7.11.1</ecNumber>
    </recommendedName>
    <alternativeName>
        <fullName evidence="3">Serine/threonine-protein kinase sepH</fullName>
    </alternativeName>
</protein>
<name>SEPH_ASPNC</name>
<keyword id="KW-0067">ATP-binding</keyword>
<keyword id="KW-0131">Cell cycle</keyword>
<keyword id="KW-0132">Cell division</keyword>
<keyword id="KW-0175">Coiled coil</keyword>
<keyword id="KW-0418">Kinase</keyword>
<keyword id="KW-0460">Magnesium</keyword>
<keyword id="KW-0479">Metal-binding</keyword>
<keyword id="KW-0547">Nucleotide-binding</keyword>
<keyword id="KW-1185">Reference proteome</keyword>
<keyword id="KW-0723">Serine/threonine-protein kinase</keyword>
<keyword id="KW-0808">Transferase</keyword>
<comment type="function">
    <text evidence="3">Required for early events during cytokinesis including localization of cytoskeletal components to the cytokinetic ring.</text>
</comment>
<comment type="catalytic activity">
    <reaction evidence="2">
        <text>L-seryl-[protein] + ATP = O-phospho-L-seryl-[protein] + ADP + H(+)</text>
        <dbReference type="Rhea" id="RHEA:17989"/>
        <dbReference type="Rhea" id="RHEA-COMP:9863"/>
        <dbReference type="Rhea" id="RHEA-COMP:11604"/>
        <dbReference type="ChEBI" id="CHEBI:15378"/>
        <dbReference type="ChEBI" id="CHEBI:29999"/>
        <dbReference type="ChEBI" id="CHEBI:30616"/>
        <dbReference type="ChEBI" id="CHEBI:83421"/>
        <dbReference type="ChEBI" id="CHEBI:456216"/>
        <dbReference type="EC" id="2.7.11.1"/>
    </reaction>
</comment>
<comment type="catalytic activity">
    <reaction evidence="2">
        <text>L-threonyl-[protein] + ATP = O-phospho-L-threonyl-[protein] + ADP + H(+)</text>
        <dbReference type="Rhea" id="RHEA:46608"/>
        <dbReference type="Rhea" id="RHEA-COMP:11060"/>
        <dbReference type="Rhea" id="RHEA-COMP:11605"/>
        <dbReference type="ChEBI" id="CHEBI:15378"/>
        <dbReference type="ChEBI" id="CHEBI:30013"/>
        <dbReference type="ChEBI" id="CHEBI:30616"/>
        <dbReference type="ChEBI" id="CHEBI:61977"/>
        <dbReference type="ChEBI" id="CHEBI:456216"/>
        <dbReference type="EC" id="2.7.11.1"/>
    </reaction>
</comment>
<comment type="cofactor">
    <cofactor evidence="2">
        <name>Mg(2+)</name>
        <dbReference type="ChEBI" id="CHEBI:18420"/>
    </cofactor>
</comment>
<comment type="similarity">
    <text evidence="5">Belongs to the protein kinase superfamily. Ser/Thr protein kinase family. CDC7 subfamily.</text>
</comment>
<evidence type="ECO:0000250" key="1">
    <source>
        <dbReference type="UniProtKB" id="P28523"/>
    </source>
</evidence>
<evidence type="ECO:0000250" key="2">
    <source>
        <dbReference type="UniProtKB" id="P41892"/>
    </source>
</evidence>
<evidence type="ECO:0000250" key="3">
    <source>
        <dbReference type="UniProtKB" id="Q5B4Z3"/>
    </source>
</evidence>
<evidence type="ECO:0000255" key="4"/>
<evidence type="ECO:0000255" key="5">
    <source>
        <dbReference type="PROSITE-ProRule" id="PRU00159"/>
    </source>
</evidence>
<evidence type="ECO:0000255" key="6">
    <source>
        <dbReference type="PROSITE-ProRule" id="PRU10027"/>
    </source>
</evidence>
<evidence type="ECO:0000256" key="7">
    <source>
        <dbReference type="SAM" id="MobiDB-lite"/>
    </source>
</evidence>
<evidence type="ECO:0000312" key="8">
    <source>
        <dbReference type="EMBL" id="CAK38570.1"/>
    </source>
</evidence>
<proteinExistence type="inferred from homology"/>
<accession>A2QHV0</accession>
<feature type="chain" id="PRO_0000396517" description="Cytokinesis protein sepH">
    <location>
        <begin position="1"/>
        <end position="1336"/>
    </location>
</feature>
<feature type="domain" description="Protein kinase" evidence="5">
    <location>
        <begin position="59"/>
        <end position="309"/>
    </location>
</feature>
<feature type="region of interest" description="Disordered" evidence="7">
    <location>
        <begin position="1"/>
        <end position="46"/>
    </location>
</feature>
<feature type="region of interest" description="Disordered" evidence="7">
    <location>
        <begin position="368"/>
        <end position="402"/>
    </location>
</feature>
<feature type="region of interest" description="Disordered" evidence="7">
    <location>
        <begin position="1194"/>
        <end position="1336"/>
    </location>
</feature>
<feature type="coiled-coil region" evidence="4">
    <location>
        <begin position="654"/>
        <end position="682"/>
    </location>
</feature>
<feature type="compositionally biased region" description="Low complexity" evidence="7">
    <location>
        <begin position="1"/>
        <end position="10"/>
    </location>
</feature>
<feature type="compositionally biased region" description="Basic and acidic residues" evidence="7">
    <location>
        <begin position="36"/>
        <end position="46"/>
    </location>
</feature>
<feature type="compositionally biased region" description="Basic and acidic residues" evidence="7">
    <location>
        <begin position="384"/>
        <end position="393"/>
    </location>
</feature>
<feature type="compositionally biased region" description="Basic and acidic residues" evidence="7">
    <location>
        <begin position="1194"/>
        <end position="1205"/>
    </location>
</feature>
<feature type="compositionally biased region" description="Polar residues" evidence="7">
    <location>
        <begin position="1213"/>
        <end position="1236"/>
    </location>
</feature>
<feature type="compositionally biased region" description="Low complexity" evidence="7">
    <location>
        <begin position="1253"/>
        <end position="1264"/>
    </location>
</feature>
<feature type="compositionally biased region" description="Low complexity" evidence="7">
    <location>
        <begin position="1272"/>
        <end position="1285"/>
    </location>
</feature>
<feature type="compositionally biased region" description="Basic residues" evidence="7">
    <location>
        <begin position="1315"/>
        <end position="1327"/>
    </location>
</feature>
<feature type="active site" description="Proton acceptor" evidence="1 5 6">
    <location>
        <position position="181"/>
    </location>
</feature>
<feature type="binding site" evidence="1 5">
    <location>
        <begin position="65"/>
        <end position="73"/>
    </location>
    <ligand>
        <name>ATP</name>
        <dbReference type="ChEBI" id="CHEBI:30616"/>
    </ligand>
</feature>
<feature type="binding site" evidence="1 5">
    <location>
        <position position="88"/>
    </location>
    <ligand>
        <name>ATP</name>
        <dbReference type="ChEBI" id="CHEBI:30616"/>
    </ligand>
</feature>
<organism>
    <name type="scientific">Aspergillus niger (strain ATCC MYA-4892 / CBS 513.88 / FGSC A1513)</name>
    <dbReference type="NCBI Taxonomy" id="425011"/>
    <lineage>
        <taxon>Eukaryota</taxon>
        <taxon>Fungi</taxon>
        <taxon>Dikarya</taxon>
        <taxon>Ascomycota</taxon>
        <taxon>Pezizomycotina</taxon>
        <taxon>Eurotiomycetes</taxon>
        <taxon>Eurotiomycetidae</taxon>
        <taxon>Eurotiales</taxon>
        <taxon>Aspergillaceae</taxon>
        <taxon>Aspergillus</taxon>
        <taxon>Aspergillus subgen. Circumdati</taxon>
    </lineage>
</organism>
<dbReference type="EC" id="2.7.11.1"/>
<dbReference type="EMBL" id="AM270068">
    <property type="protein sequence ID" value="CAK38570.1"/>
    <property type="molecule type" value="Genomic_DNA"/>
</dbReference>
<dbReference type="RefSeq" id="XP_001401478.1">
    <property type="nucleotide sequence ID" value="XM_001401441.1"/>
</dbReference>
<dbReference type="SMR" id="A2QHV0"/>
<dbReference type="EnsemblFungi" id="CAK38570">
    <property type="protein sequence ID" value="CAK38570"/>
    <property type="gene ID" value="An04g01130"/>
</dbReference>
<dbReference type="GeneID" id="4990515"/>
<dbReference type="KEGG" id="ang:An04g01130"/>
<dbReference type="VEuPathDB" id="FungiDB:An04g01130"/>
<dbReference type="HOGENOM" id="CLU_001872_1_1_1"/>
<dbReference type="Proteomes" id="UP000006706">
    <property type="component" value="Chromosome 6L"/>
</dbReference>
<dbReference type="GO" id="GO:0005737">
    <property type="term" value="C:cytoplasm"/>
    <property type="evidence" value="ECO:0007669"/>
    <property type="project" value="TreeGrafter"/>
</dbReference>
<dbReference type="GO" id="GO:0005524">
    <property type="term" value="F:ATP binding"/>
    <property type="evidence" value="ECO:0007669"/>
    <property type="project" value="UniProtKB-KW"/>
</dbReference>
<dbReference type="GO" id="GO:0046872">
    <property type="term" value="F:metal ion binding"/>
    <property type="evidence" value="ECO:0007669"/>
    <property type="project" value="UniProtKB-KW"/>
</dbReference>
<dbReference type="GO" id="GO:0106310">
    <property type="term" value="F:protein serine kinase activity"/>
    <property type="evidence" value="ECO:0007669"/>
    <property type="project" value="RHEA"/>
</dbReference>
<dbReference type="GO" id="GO:0004674">
    <property type="term" value="F:protein serine/threonine kinase activity"/>
    <property type="evidence" value="ECO:0007669"/>
    <property type="project" value="UniProtKB-KW"/>
</dbReference>
<dbReference type="GO" id="GO:0051301">
    <property type="term" value="P:cell division"/>
    <property type="evidence" value="ECO:0007669"/>
    <property type="project" value="UniProtKB-KW"/>
</dbReference>
<dbReference type="CDD" id="cd06627">
    <property type="entry name" value="STKc_Cdc7_like"/>
    <property type="match status" value="1"/>
</dbReference>
<dbReference type="FunFam" id="3.30.200.20:FF:000042">
    <property type="entry name" value="Aurora kinase A"/>
    <property type="match status" value="1"/>
</dbReference>
<dbReference type="FunFam" id="1.25.10.10:FF:000176">
    <property type="entry name" value="Cell division control protein"/>
    <property type="match status" value="1"/>
</dbReference>
<dbReference type="FunFam" id="1.25.10.10:FF:000212">
    <property type="entry name" value="Cell division control protein"/>
    <property type="match status" value="1"/>
</dbReference>
<dbReference type="FunFam" id="1.10.510.10:FF:000246">
    <property type="entry name" value="Putative Serine-threonine kinase SepH"/>
    <property type="match status" value="1"/>
</dbReference>
<dbReference type="Gene3D" id="1.25.10.10">
    <property type="entry name" value="Leucine-rich Repeat Variant"/>
    <property type="match status" value="3"/>
</dbReference>
<dbReference type="Gene3D" id="1.10.510.10">
    <property type="entry name" value="Transferase(Phosphotransferase) domain 1"/>
    <property type="match status" value="1"/>
</dbReference>
<dbReference type="InterPro" id="IPR011989">
    <property type="entry name" value="ARM-like"/>
</dbReference>
<dbReference type="InterPro" id="IPR016024">
    <property type="entry name" value="ARM-type_fold"/>
</dbReference>
<dbReference type="InterPro" id="IPR011009">
    <property type="entry name" value="Kinase-like_dom_sf"/>
</dbReference>
<dbReference type="InterPro" id="IPR000719">
    <property type="entry name" value="Prot_kinase_dom"/>
</dbReference>
<dbReference type="InterPro" id="IPR017441">
    <property type="entry name" value="Protein_kinase_ATP_BS"/>
</dbReference>
<dbReference type="InterPro" id="IPR008271">
    <property type="entry name" value="Ser/Thr_kinase_AS"/>
</dbReference>
<dbReference type="InterPro" id="IPR053235">
    <property type="entry name" value="Ser_Thr_kinase"/>
</dbReference>
<dbReference type="PANTHER" id="PTHR24361">
    <property type="entry name" value="MITOGEN-ACTIVATED KINASE KINASE KINASE"/>
    <property type="match status" value="1"/>
</dbReference>
<dbReference type="PANTHER" id="PTHR24361:SF433">
    <property type="entry name" value="PROTEIN KINASE DOMAIN-CONTAINING PROTEIN"/>
    <property type="match status" value="1"/>
</dbReference>
<dbReference type="Pfam" id="PF00069">
    <property type="entry name" value="Pkinase"/>
    <property type="match status" value="1"/>
</dbReference>
<dbReference type="SMART" id="SM00220">
    <property type="entry name" value="S_TKc"/>
    <property type="match status" value="1"/>
</dbReference>
<dbReference type="SUPFAM" id="SSF48371">
    <property type="entry name" value="ARM repeat"/>
    <property type="match status" value="2"/>
</dbReference>
<dbReference type="SUPFAM" id="SSF56112">
    <property type="entry name" value="Protein kinase-like (PK-like)"/>
    <property type="match status" value="1"/>
</dbReference>
<dbReference type="PROSITE" id="PS00107">
    <property type="entry name" value="PROTEIN_KINASE_ATP"/>
    <property type="match status" value="1"/>
</dbReference>
<dbReference type="PROSITE" id="PS50011">
    <property type="entry name" value="PROTEIN_KINASE_DOM"/>
    <property type="match status" value="1"/>
</dbReference>
<dbReference type="PROSITE" id="PS00108">
    <property type="entry name" value="PROTEIN_KINASE_ST"/>
    <property type="match status" value="1"/>
</dbReference>
<sequence length="1336" mass="149659">MVSRSSETSEGPPPPSKIPGTPAKTRLSRLNSSPAKQDKPKDDRVVKSSAKDVAELKDYQLGDCLGKGAFGSVYRALNWNTGETVAVKQIKLVDLPKSELRVIMLEIDLLKNLDHPNIVKYQGFVKSAETLNIILEYCENGSLHSIAKNFGRFPENLVGLYMSQVLHGLLYLHEQGVIHRDIKGANILTTKEGLVKLADFGVASRTTGLSESSVVGTPYWMAPEVIELSGATTASDIWSLGCTVIELLEGKPPYYNLQPMPALFRIVNDDHPPLPQGASPAVKDFLMQCFQKDPNLRVSARKLLKHPWIVNARRSDSVVPKKSTEYEEAVKSVQEWNEALRSPDTGTLRKPYRYDAQGAALRPEMAPSRYTPTKDILPSPVSKHVTDRFRSPDSTEEDNWDDDFATAISPSALQLPHLRPQDNFGGMLSSEKLKAFASLDGTVLKSEDGFDDFDDPFSQQPGESDPLRTIRPYSAKPTGMENMSQQTKPTIAAMHHNVPVLKTPVPPLRPQRPTSYFKENSVEDYSDLISANEDILDDKLSAFQDIDEEGSDISIPSPSKEVVRYQASPDHDEDHQPQLRKRISVKRHRSAIEIQKFAENERDEDFSDILGADEVALDKPESDEGSDRSTLMLNSKLSNNSWLGDQDDEDDPFAQLEEGLDEVDLEANIARDKYARLRGQVEGLVSSLKTSQDEDVLGEISEQLLTVFCDLPETKNIIISAHGMLPILEILDICRRRDIILCLLRIVNAIIFNDYEIQENLCFVGGIPIINEFASKKYPREIRLEAAAFVQQMYQTSTLTLQMFVSAGGLNVLVEFLEDDYEDERDLVLIGVNGIWSVFDLQGSTPKNDFCRILSRNSVLDPLSLVLSRVLDEEGELAEIVEGRIANIFFIFSQAENHVKEMVAERTVLHRVLKELKRMTPAHQITMLKFIKNLSMLSTTLDSLQNSNAIDVLTDLLRSTIKRPHFREVSNQILNTIYNMCRLNKSRQEDAALNGIVPLLQKIVKTERPLKEFALPILCDMAHSGKVGRRELWRNKGLAFYISLLSDPYWQVTALDAIFTWLQEETAKVEEHLLDNRYDKMSFTDSIVRCLTISKANAFENILEPLQKLLRLSPPIASTFARPDLFTRLGQKLHHNKAAVRLNLLRIISSICDSSEEQGGLLAKYGLLEAIRELEHDPAILVRDMAGKLIQSNERSESFSLEKRKPGMRRKSTSTTPPGYLANQSAPATPQINRFNQPKAYFDGRESQRHPRPSLSSSALALRPGSRDGTGPSLSAGLSSSAGPSRNRLSRGVANRLSQVELLAEEETRPSSSLSRRRSILPQRRRPTHADSDWAS</sequence>
<reference evidence="8" key="1">
    <citation type="journal article" date="2007" name="Nat. Biotechnol.">
        <title>Genome sequencing and analysis of the versatile cell factory Aspergillus niger CBS 513.88.</title>
        <authorList>
            <person name="Pel H.J."/>
            <person name="de Winde J.H."/>
            <person name="Archer D.B."/>
            <person name="Dyer P.S."/>
            <person name="Hofmann G."/>
            <person name="Schaap P.J."/>
            <person name="Turner G."/>
            <person name="de Vries R.P."/>
            <person name="Albang R."/>
            <person name="Albermann K."/>
            <person name="Andersen M.R."/>
            <person name="Bendtsen J.D."/>
            <person name="Benen J.A.E."/>
            <person name="van den Berg M."/>
            <person name="Breestraat S."/>
            <person name="Caddick M.X."/>
            <person name="Contreras R."/>
            <person name="Cornell M."/>
            <person name="Coutinho P.M."/>
            <person name="Danchin E.G.J."/>
            <person name="Debets A.J.M."/>
            <person name="Dekker P."/>
            <person name="van Dijck P.W.M."/>
            <person name="van Dijk A."/>
            <person name="Dijkhuizen L."/>
            <person name="Driessen A.J.M."/>
            <person name="d'Enfert C."/>
            <person name="Geysens S."/>
            <person name="Goosen C."/>
            <person name="Groot G.S.P."/>
            <person name="de Groot P.W.J."/>
            <person name="Guillemette T."/>
            <person name="Henrissat B."/>
            <person name="Herweijer M."/>
            <person name="van den Hombergh J.P.T.W."/>
            <person name="van den Hondel C.A.M.J.J."/>
            <person name="van der Heijden R.T.J.M."/>
            <person name="van der Kaaij R.M."/>
            <person name="Klis F.M."/>
            <person name="Kools H.J."/>
            <person name="Kubicek C.P."/>
            <person name="van Kuyk P.A."/>
            <person name="Lauber J."/>
            <person name="Lu X."/>
            <person name="van der Maarel M.J.E.C."/>
            <person name="Meulenberg R."/>
            <person name="Menke H."/>
            <person name="Mortimer M.A."/>
            <person name="Nielsen J."/>
            <person name="Oliver S.G."/>
            <person name="Olsthoorn M."/>
            <person name="Pal K."/>
            <person name="van Peij N.N.M.E."/>
            <person name="Ram A.F.J."/>
            <person name="Rinas U."/>
            <person name="Roubos J.A."/>
            <person name="Sagt C.M.J."/>
            <person name="Schmoll M."/>
            <person name="Sun J."/>
            <person name="Ussery D."/>
            <person name="Varga J."/>
            <person name="Vervecken W."/>
            <person name="van de Vondervoort P.J.J."/>
            <person name="Wedler H."/>
            <person name="Woesten H.A.B."/>
            <person name="Zeng A.-P."/>
            <person name="van Ooyen A.J.J."/>
            <person name="Visser J."/>
            <person name="Stam H."/>
        </authorList>
    </citation>
    <scope>NUCLEOTIDE SEQUENCE [LARGE SCALE GENOMIC DNA]</scope>
    <source>
        <strain>ATCC MYA-4892 / CBS 513.88 / FGSC A1513</strain>
    </source>
</reference>
<gene>
    <name evidence="3" type="primary">sepH</name>
    <name type="ORF">An04g01130</name>
</gene>